<protein>
    <recommendedName>
        <fullName evidence="1">Elongation factor P</fullName>
        <shortName evidence="1">EF-P</shortName>
    </recommendedName>
</protein>
<gene>
    <name evidence="1" type="primary">efp</name>
    <name type="ordered locus">Sde_1082</name>
</gene>
<feature type="chain" id="PRO_1000010842" description="Elongation factor P">
    <location>
        <begin position="1"/>
        <end position="189"/>
    </location>
</feature>
<feature type="modified residue" description="N6-(3,6-diaminohexanoyl)-5-hydroxylysine" evidence="1">
    <location>
        <position position="34"/>
    </location>
</feature>
<organism>
    <name type="scientific">Saccharophagus degradans (strain 2-40 / ATCC 43961 / DSM 17024)</name>
    <dbReference type="NCBI Taxonomy" id="203122"/>
    <lineage>
        <taxon>Bacteria</taxon>
        <taxon>Pseudomonadati</taxon>
        <taxon>Pseudomonadota</taxon>
        <taxon>Gammaproteobacteria</taxon>
        <taxon>Cellvibrionales</taxon>
        <taxon>Cellvibrionaceae</taxon>
        <taxon>Saccharophagus</taxon>
    </lineage>
</organism>
<proteinExistence type="inferred from homology"/>
<dbReference type="EMBL" id="CP000282">
    <property type="protein sequence ID" value="ABD80344.1"/>
    <property type="molecule type" value="Genomic_DNA"/>
</dbReference>
<dbReference type="RefSeq" id="WP_011467564.1">
    <property type="nucleotide sequence ID" value="NC_007912.1"/>
</dbReference>
<dbReference type="SMR" id="Q21LT5"/>
<dbReference type="STRING" id="203122.Sde_1082"/>
<dbReference type="GeneID" id="98612761"/>
<dbReference type="KEGG" id="sde:Sde_1082"/>
<dbReference type="eggNOG" id="COG0231">
    <property type="taxonomic scope" value="Bacteria"/>
</dbReference>
<dbReference type="HOGENOM" id="CLU_074944_0_0_6"/>
<dbReference type="OrthoDB" id="9801844at2"/>
<dbReference type="UniPathway" id="UPA00345"/>
<dbReference type="Proteomes" id="UP000001947">
    <property type="component" value="Chromosome"/>
</dbReference>
<dbReference type="GO" id="GO:0005737">
    <property type="term" value="C:cytoplasm"/>
    <property type="evidence" value="ECO:0007669"/>
    <property type="project" value="UniProtKB-SubCell"/>
</dbReference>
<dbReference type="GO" id="GO:0003746">
    <property type="term" value="F:translation elongation factor activity"/>
    <property type="evidence" value="ECO:0007669"/>
    <property type="project" value="UniProtKB-UniRule"/>
</dbReference>
<dbReference type="GO" id="GO:0043043">
    <property type="term" value="P:peptide biosynthetic process"/>
    <property type="evidence" value="ECO:0007669"/>
    <property type="project" value="InterPro"/>
</dbReference>
<dbReference type="CDD" id="cd04470">
    <property type="entry name" value="S1_EF-P_repeat_1"/>
    <property type="match status" value="1"/>
</dbReference>
<dbReference type="CDD" id="cd05794">
    <property type="entry name" value="S1_EF-P_repeat_2"/>
    <property type="match status" value="1"/>
</dbReference>
<dbReference type="FunFam" id="2.30.30.30:FF:000003">
    <property type="entry name" value="Elongation factor P"/>
    <property type="match status" value="1"/>
</dbReference>
<dbReference type="FunFam" id="2.40.50.140:FF:000004">
    <property type="entry name" value="Elongation factor P"/>
    <property type="match status" value="1"/>
</dbReference>
<dbReference type="FunFam" id="2.40.50.140:FF:000009">
    <property type="entry name" value="Elongation factor P"/>
    <property type="match status" value="1"/>
</dbReference>
<dbReference type="Gene3D" id="2.30.30.30">
    <property type="match status" value="1"/>
</dbReference>
<dbReference type="Gene3D" id="2.40.50.140">
    <property type="entry name" value="Nucleic acid-binding proteins"/>
    <property type="match status" value="2"/>
</dbReference>
<dbReference type="HAMAP" id="MF_00141">
    <property type="entry name" value="EF_P"/>
    <property type="match status" value="1"/>
</dbReference>
<dbReference type="InterPro" id="IPR015365">
    <property type="entry name" value="Elong-fact-P_C"/>
</dbReference>
<dbReference type="InterPro" id="IPR012340">
    <property type="entry name" value="NA-bd_OB-fold"/>
</dbReference>
<dbReference type="InterPro" id="IPR014722">
    <property type="entry name" value="Rib_uL2_dom2"/>
</dbReference>
<dbReference type="InterPro" id="IPR020599">
    <property type="entry name" value="Transl_elong_fac_P/YeiP"/>
</dbReference>
<dbReference type="InterPro" id="IPR013185">
    <property type="entry name" value="Transl_elong_KOW-like"/>
</dbReference>
<dbReference type="InterPro" id="IPR001059">
    <property type="entry name" value="Transl_elong_P/YeiP_cen"/>
</dbReference>
<dbReference type="InterPro" id="IPR013852">
    <property type="entry name" value="Transl_elong_P/YeiP_CS"/>
</dbReference>
<dbReference type="InterPro" id="IPR011768">
    <property type="entry name" value="Transl_elongation_fac_P"/>
</dbReference>
<dbReference type="InterPro" id="IPR008991">
    <property type="entry name" value="Translation_prot_SH3-like_sf"/>
</dbReference>
<dbReference type="NCBIfam" id="TIGR00038">
    <property type="entry name" value="efp"/>
    <property type="match status" value="1"/>
</dbReference>
<dbReference type="NCBIfam" id="NF001810">
    <property type="entry name" value="PRK00529.1"/>
    <property type="match status" value="1"/>
</dbReference>
<dbReference type="PANTHER" id="PTHR30053">
    <property type="entry name" value="ELONGATION FACTOR P"/>
    <property type="match status" value="1"/>
</dbReference>
<dbReference type="PANTHER" id="PTHR30053:SF12">
    <property type="entry name" value="ELONGATION FACTOR P (EF-P) FAMILY PROTEIN"/>
    <property type="match status" value="1"/>
</dbReference>
<dbReference type="Pfam" id="PF01132">
    <property type="entry name" value="EFP"/>
    <property type="match status" value="1"/>
</dbReference>
<dbReference type="Pfam" id="PF08207">
    <property type="entry name" value="EFP_N"/>
    <property type="match status" value="1"/>
</dbReference>
<dbReference type="Pfam" id="PF09285">
    <property type="entry name" value="Elong-fact-P_C"/>
    <property type="match status" value="1"/>
</dbReference>
<dbReference type="PIRSF" id="PIRSF005901">
    <property type="entry name" value="EF-P"/>
    <property type="match status" value="1"/>
</dbReference>
<dbReference type="SMART" id="SM01185">
    <property type="entry name" value="EFP"/>
    <property type="match status" value="1"/>
</dbReference>
<dbReference type="SMART" id="SM00841">
    <property type="entry name" value="Elong-fact-P_C"/>
    <property type="match status" value="1"/>
</dbReference>
<dbReference type="SUPFAM" id="SSF50249">
    <property type="entry name" value="Nucleic acid-binding proteins"/>
    <property type="match status" value="2"/>
</dbReference>
<dbReference type="SUPFAM" id="SSF50104">
    <property type="entry name" value="Translation proteins SH3-like domain"/>
    <property type="match status" value="1"/>
</dbReference>
<dbReference type="PROSITE" id="PS01275">
    <property type="entry name" value="EFP"/>
    <property type="match status" value="1"/>
</dbReference>
<keyword id="KW-0963">Cytoplasm</keyword>
<keyword id="KW-0251">Elongation factor</keyword>
<keyword id="KW-0379">Hydroxylation</keyword>
<keyword id="KW-0648">Protein biosynthesis</keyword>
<keyword id="KW-1185">Reference proteome</keyword>
<evidence type="ECO:0000255" key="1">
    <source>
        <dbReference type="HAMAP-Rule" id="MF_00141"/>
    </source>
</evidence>
<name>EFP_SACD2</name>
<comment type="function">
    <text evidence="1">Involved in peptide bond synthesis. Alleviates ribosome stalling that occurs when 3 or more consecutive Pro residues or the sequence PPG is present in a protein, possibly by augmenting the peptidyl transferase activity of the ribosome. Modification of Lys-34 is required for alleviation.</text>
</comment>
<comment type="pathway">
    <text evidence="1">Protein biosynthesis; polypeptide chain elongation.</text>
</comment>
<comment type="subcellular location">
    <subcellularLocation>
        <location evidence="1">Cytoplasm</location>
    </subcellularLocation>
</comment>
<comment type="PTM">
    <text evidence="1">May be beta-lysylated on the epsilon-amino group of Lys-34 by the combined action of EpmA and EpmB, and then hydroxylated on the C5 position of the same residue by EpmC (if this protein is present). Lysylation is critical for the stimulatory effect of EF-P on peptide-bond formation. The lysylation moiety may extend toward the peptidyltransferase center and stabilize the terminal 3-CCA end of the tRNA. Hydroxylation of the C5 position on Lys-34 may allow additional potential stabilizing hydrogen-bond interactions with the P-tRNA.</text>
</comment>
<comment type="similarity">
    <text evidence="1">Belongs to the elongation factor P family.</text>
</comment>
<sequence>MATYSASDFRSGLKVMLDGDPCAIVENELVKPGKGQAFARVRLRNLKTGRVWERTFKSGETLEGADVMDRDMEYLYTDGEFWHFMEPDSFEQYQADANAVGDSAKWLREQDKVIVTLFNGSPLAITPPNHVELEIVETDPGLKGDTAQGGTKPATLTTGAVVKVPLFISTGEVVRVDTRTGEYLGRASK</sequence>
<accession>Q21LT5</accession>
<reference key="1">
    <citation type="journal article" date="2008" name="PLoS Genet.">
        <title>Complete genome sequence of the complex carbohydrate-degrading marine bacterium, Saccharophagus degradans strain 2-40 T.</title>
        <authorList>
            <person name="Weiner R.M."/>
            <person name="Taylor L.E. II"/>
            <person name="Henrissat B."/>
            <person name="Hauser L."/>
            <person name="Land M."/>
            <person name="Coutinho P.M."/>
            <person name="Rancurel C."/>
            <person name="Saunders E.H."/>
            <person name="Longmire A.G."/>
            <person name="Zhang H."/>
            <person name="Bayer E.A."/>
            <person name="Gilbert H.J."/>
            <person name="Larimer F."/>
            <person name="Zhulin I.B."/>
            <person name="Ekborg N.A."/>
            <person name="Lamed R."/>
            <person name="Richardson P.M."/>
            <person name="Borovok I."/>
            <person name="Hutcheson S."/>
        </authorList>
    </citation>
    <scope>NUCLEOTIDE SEQUENCE [LARGE SCALE GENOMIC DNA]</scope>
    <source>
        <strain>2-40 / ATCC 43961 / DSM 17024</strain>
    </source>
</reference>